<sequence length="396" mass="44031">MLDAQTIATVKATIPLLVETGPKLTAHFYDRMFTHNPELKEIFNMSNQRNGDQREALFNAIAAYASNIENLPALLPAVEKIAQKHTSFQIKPEQYNIVGTHLLATLDEMFNPGQEVLDAWGKAYGVLANVFIHREAEIYHENASKDGGWEGTRPFRIVAKTPRSALITSFEFEPVDGGTVAEYRPGQYLGVWLKPEGFAHQEIRQYSLTRKPDGKGYRIAVKREDGGQVSNWLHHHANVGDVVHLAAPAGDFFMNVAADTPVSLISAGVGQTPMLAMLDTLAKEQHTAQVNWFHAAENGDVHAFADEVSELGRTLPRFTAHTWYREPTEADRAQRVFDSEGLMDLSKLEAAISDPAMQFYLCGPVGFMQFAAKQLVSLGVNNENIHYECFGPHKVL</sequence>
<protein>
    <recommendedName>
        <fullName evidence="1">Flavohemoprotein</fullName>
    </recommendedName>
    <alternativeName>
        <fullName evidence="1">Flavohemoglobin</fullName>
    </alternativeName>
    <alternativeName>
        <fullName evidence="1">Hemoglobin-like protein</fullName>
    </alternativeName>
    <alternativeName>
        <fullName evidence="1">Nitric oxide dioxygenase</fullName>
        <shortName evidence="1">NO oxygenase</shortName>
        <shortName evidence="1">NOD</shortName>
        <ecNumber evidence="1">1.14.12.17</ecNumber>
    </alternativeName>
</protein>
<evidence type="ECO:0000255" key="1">
    <source>
        <dbReference type="HAMAP-Rule" id="MF_01252"/>
    </source>
</evidence>
<evidence type="ECO:0000255" key="2">
    <source>
        <dbReference type="PROSITE-ProRule" id="PRU00238"/>
    </source>
</evidence>
<organism>
    <name type="scientific">Salmonella typhi</name>
    <dbReference type="NCBI Taxonomy" id="90370"/>
    <lineage>
        <taxon>Bacteria</taxon>
        <taxon>Pseudomonadati</taxon>
        <taxon>Pseudomonadota</taxon>
        <taxon>Gammaproteobacteria</taxon>
        <taxon>Enterobacterales</taxon>
        <taxon>Enterobacteriaceae</taxon>
        <taxon>Salmonella</taxon>
    </lineage>
</organism>
<name>HMP_SALTI</name>
<proteinExistence type="inferred from homology"/>
<feature type="chain" id="PRO_0000052446" description="Flavohemoprotein">
    <location>
        <begin position="1"/>
        <end position="396"/>
    </location>
</feature>
<feature type="domain" description="Globin" evidence="2">
    <location>
        <begin position="1"/>
        <end position="136"/>
    </location>
</feature>
<feature type="domain" description="FAD-binding FR-type" evidence="1">
    <location>
        <begin position="150"/>
        <end position="255"/>
    </location>
</feature>
<feature type="region of interest" description="Reductase">
    <location>
        <begin position="147"/>
        <end position="396"/>
    </location>
</feature>
<feature type="active site" description="Charge relay system" evidence="1">
    <location>
        <position position="95"/>
    </location>
</feature>
<feature type="active site" description="Charge relay system" evidence="1">
    <location>
        <position position="135"/>
    </location>
</feature>
<feature type="binding site" description="proximal binding residue" evidence="1">
    <location>
        <position position="85"/>
    </location>
    <ligand>
        <name>heme b</name>
        <dbReference type="ChEBI" id="CHEBI:60344"/>
    </ligand>
    <ligandPart>
        <name>Fe</name>
        <dbReference type="ChEBI" id="CHEBI:18248"/>
    </ligandPart>
</feature>
<feature type="binding site" evidence="1">
    <location>
        <position position="188"/>
    </location>
    <ligand>
        <name>FAD</name>
        <dbReference type="ChEBI" id="CHEBI:57692"/>
    </ligand>
</feature>
<feature type="binding site" evidence="1">
    <location>
        <begin position="204"/>
        <end position="207"/>
    </location>
    <ligand>
        <name>FAD</name>
        <dbReference type="ChEBI" id="CHEBI:57692"/>
    </ligand>
</feature>
<feature type="binding site" evidence="1">
    <location>
        <begin position="268"/>
        <end position="273"/>
    </location>
    <ligand>
        <name>NADP(+)</name>
        <dbReference type="ChEBI" id="CHEBI:58349"/>
    </ligand>
</feature>
<feature type="binding site" evidence="1">
    <location>
        <begin position="389"/>
        <end position="392"/>
    </location>
    <ligand>
        <name>FAD</name>
        <dbReference type="ChEBI" id="CHEBI:57692"/>
    </ligand>
</feature>
<feature type="site" description="Involved in heme-bound ligand stabilization and O-O bond activation" evidence="1">
    <location>
        <position position="29"/>
    </location>
</feature>
<feature type="site" description="Influences the redox potential of the prosthetic heme and FAD groups" evidence="1">
    <location>
        <position position="84"/>
    </location>
</feature>
<feature type="site" description="Influences the redox potential of the prosthetic heme and FAD groups" evidence="1">
    <location>
        <position position="388"/>
    </location>
</feature>
<dbReference type="EC" id="1.14.12.17" evidence="1"/>
<dbReference type="EMBL" id="AL513382">
    <property type="protein sequence ID" value="CAD02759.1"/>
    <property type="molecule type" value="Genomic_DNA"/>
</dbReference>
<dbReference type="EMBL" id="AE014613">
    <property type="protein sequence ID" value="AAO68025.1"/>
    <property type="molecule type" value="Genomic_DNA"/>
</dbReference>
<dbReference type="RefSeq" id="NP_457086.1">
    <property type="nucleotide sequence ID" value="NC_003198.1"/>
</dbReference>
<dbReference type="RefSeq" id="WP_000883143.1">
    <property type="nucleotide sequence ID" value="NZ_WSUR01000007.1"/>
</dbReference>
<dbReference type="SMR" id="Q8Z4M3"/>
<dbReference type="STRING" id="220341.gene:17586693"/>
<dbReference type="KEGG" id="stt:t0300"/>
<dbReference type="KEGG" id="sty:STY2803"/>
<dbReference type="PATRIC" id="fig|220341.7.peg.2850"/>
<dbReference type="eggNOG" id="COG1017">
    <property type="taxonomic scope" value="Bacteria"/>
</dbReference>
<dbReference type="eggNOG" id="COG1018">
    <property type="taxonomic scope" value="Bacteria"/>
</dbReference>
<dbReference type="HOGENOM" id="CLU_003827_12_0_6"/>
<dbReference type="OMA" id="ADIHYEV"/>
<dbReference type="OrthoDB" id="9801223at2"/>
<dbReference type="Proteomes" id="UP000000541">
    <property type="component" value="Chromosome"/>
</dbReference>
<dbReference type="Proteomes" id="UP000002670">
    <property type="component" value="Chromosome"/>
</dbReference>
<dbReference type="GO" id="GO:0071949">
    <property type="term" value="F:FAD binding"/>
    <property type="evidence" value="ECO:0007669"/>
    <property type="project" value="InterPro"/>
</dbReference>
<dbReference type="GO" id="GO:0020037">
    <property type="term" value="F:heme binding"/>
    <property type="evidence" value="ECO:0007669"/>
    <property type="project" value="InterPro"/>
</dbReference>
<dbReference type="GO" id="GO:0046872">
    <property type="term" value="F:metal ion binding"/>
    <property type="evidence" value="ECO:0007669"/>
    <property type="project" value="UniProtKB-KW"/>
</dbReference>
<dbReference type="GO" id="GO:0008941">
    <property type="term" value="F:nitric oxide dioxygenase NAD(P)H activity"/>
    <property type="evidence" value="ECO:0007669"/>
    <property type="project" value="UniProtKB-UniRule"/>
</dbReference>
<dbReference type="GO" id="GO:0019825">
    <property type="term" value="F:oxygen binding"/>
    <property type="evidence" value="ECO:0007669"/>
    <property type="project" value="InterPro"/>
</dbReference>
<dbReference type="GO" id="GO:0005344">
    <property type="term" value="F:oxygen carrier activity"/>
    <property type="evidence" value="ECO:0007669"/>
    <property type="project" value="UniProtKB-UniRule"/>
</dbReference>
<dbReference type="GO" id="GO:0071500">
    <property type="term" value="P:cellular response to nitrosative stress"/>
    <property type="evidence" value="ECO:0007669"/>
    <property type="project" value="TreeGrafter"/>
</dbReference>
<dbReference type="GO" id="GO:0046210">
    <property type="term" value="P:nitric oxide catabolic process"/>
    <property type="evidence" value="ECO:0007669"/>
    <property type="project" value="TreeGrafter"/>
</dbReference>
<dbReference type="GO" id="GO:0009636">
    <property type="term" value="P:response to toxic substance"/>
    <property type="evidence" value="ECO:0007669"/>
    <property type="project" value="UniProtKB-KW"/>
</dbReference>
<dbReference type="CDD" id="cd06184">
    <property type="entry name" value="flavohem_like_fad_nad_binding"/>
    <property type="match status" value="1"/>
</dbReference>
<dbReference type="CDD" id="cd14776">
    <property type="entry name" value="HmpEc-globin-like"/>
    <property type="match status" value="1"/>
</dbReference>
<dbReference type="FunFam" id="1.10.490.10:FF:000003">
    <property type="entry name" value="Flavohemoprotein"/>
    <property type="match status" value="1"/>
</dbReference>
<dbReference type="FunFam" id="2.40.30.10:FF:000034">
    <property type="entry name" value="Flavohemoprotein"/>
    <property type="match status" value="1"/>
</dbReference>
<dbReference type="FunFam" id="3.40.50.80:FF:000010">
    <property type="entry name" value="Flavohemoprotein"/>
    <property type="match status" value="1"/>
</dbReference>
<dbReference type="Gene3D" id="1.10.490.10">
    <property type="entry name" value="Globins"/>
    <property type="match status" value="1"/>
</dbReference>
<dbReference type="Gene3D" id="3.40.50.80">
    <property type="entry name" value="Nucleotide-binding domain of ferredoxin-NADP reductase (FNR) module"/>
    <property type="match status" value="1"/>
</dbReference>
<dbReference type="Gene3D" id="2.40.30.10">
    <property type="entry name" value="Translation factors"/>
    <property type="match status" value="1"/>
</dbReference>
<dbReference type="HAMAP" id="MF_01252">
    <property type="entry name" value="Hmp"/>
    <property type="match status" value="1"/>
</dbReference>
<dbReference type="InterPro" id="IPR008333">
    <property type="entry name" value="Cbr1-like_FAD-bd_dom"/>
</dbReference>
<dbReference type="InterPro" id="IPR017927">
    <property type="entry name" value="FAD-bd_FR_type"/>
</dbReference>
<dbReference type="InterPro" id="IPR039261">
    <property type="entry name" value="FNR_nucleotide-bd"/>
</dbReference>
<dbReference type="InterPro" id="IPR000971">
    <property type="entry name" value="Globin"/>
</dbReference>
<dbReference type="InterPro" id="IPR009050">
    <property type="entry name" value="Globin-like_sf"/>
</dbReference>
<dbReference type="InterPro" id="IPR012292">
    <property type="entry name" value="Globin/Proto"/>
</dbReference>
<dbReference type="InterPro" id="IPR023950">
    <property type="entry name" value="Hmp"/>
</dbReference>
<dbReference type="InterPro" id="IPR001433">
    <property type="entry name" value="OxRdtase_FAD/NAD-bd"/>
</dbReference>
<dbReference type="InterPro" id="IPR017938">
    <property type="entry name" value="Riboflavin_synthase-like_b-brl"/>
</dbReference>
<dbReference type="NCBIfam" id="NF009805">
    <property type="entry name" value="PRK13289.1"/>
    <property type="match status" value="1"/>
</dbReference>
<dbReference type="PANTHER" id="PTHR43396">
    <property type="entry name" value="FLAVOHEMOPROTEIN"/>
    <property type="match status" value="1"/>
</dbReference>
<dbReference type="PANTHER" id="PTHR43396:SF3">
    <property type="entry name" value="FLAVOHEMOPROTEIN"/>
    <property type="match status" value="1"/>
</dbReference>
<dbReference type="Pfam" id="PF00970">
    <property type="entry name" value="FAD_binding_6"/>
    <property type="match status" value="1"/>
</dbReference>
<dbReference type="Pfam" id="PF00042">
    <property type="entry name" value="Globin"/>
    <property type="match status" value="1"/>
</dbReference>
<dbReference type="Pfam" id="PF00175">
    <property type="entry name" value="NAD_binding_1"/>
    <property type="match status" value="1"/>
</dbReference>
<dbReference type="PRINTS" id="PR00410">
    <property type="entry name" value="PHEHYDRXLASE"/>
</dbReference>
<dbReference type="SUPFAM" id="SSF52343">
    <property type="entry name" value="Ferredoxin reductase-like, C-terminal NADP-linked domain"/>
    <property type="match status" value="1"/>
</dbReference>
<dbReference type="SUPFAM" id="SSF46458">
    <property type="entry name" value="Globin-like"/>
    <property type="match status" value="1"/>
</dbReference>
<dbReference type="SUPFAM" id="SSF63380">
    <property type="entry name" value="Riboflavin synthase domain-like"/>
    <property type="match status" value="1"/>
</dbReference>
<dbReference type="PROSITE" id="PS51384">
    <property type="entry name" value="FAD_FR"/>
    <property type="match status" value="1"/>
</dbReference>
<dbReference type="PROSITE" id="PS01033">
    <property type="entry name" value="GLOBIN"/>
    <property type="match status" value="1"/>
</dbReference>
<accession>Q8Z4M3</accession>
<accession>Q7CBL4</accession>
<reference key="1">
    <citation type="journal article" date="2001" name="Nature">
        <title>Complete genome sequence of a multiple drug resistant Salmonella enterica serovar Typhi CT18.</title>
        <authorList>
            <person name="Parkhill J."/>
            <person name="Dougan G."/>
            <person name="James K.D."/>
            <person name="Thomson N.R."/>
            <person name="Pickard D."/>
            <person name="Wain J."/>
            <person name="Churcher C.M."/>
            <person name="Mungall K.L."/>
            <person name="Bentley S.D."/>
            <person name="Holden M.T.G."/>
            <person name="Sebaihia M."/>
            <person name="Baker S."/>
            <person name="Basham D."/>
            <person name="Brooks K."/>
            <person name="Chillingworth T."/>
            <person name="Connerton P."/>
            <person name="Cronin A."/>
            <person name="Davis P."/>
            <person name="Davies R.M."/>
            <person name="Dowd L."/>
            <person name="White N."/>
            <person name="Farrar J."/>
            <person name="Feltwell T."/>
            <person name="Hamlin N."/>
            <person name="Haque A."/>
            <person name="Hien T.T."/>
            <person name="Holroyd S."/>
            <person name="Jagels K."/>
            <person name="Krogh A."/>
            <person name="Larsen T.S."/>
            <person name="Leather S."/>
            <person name="Moule S."/>
            <person name="O'Gaora P."/>
            <person name="Parry C."/>
            <person name="Quail M.A."/>
            <person name="Rutherford K.M."/>
            <person name="Simmonds M."/>
            <person name="Skelton J."/>
            <person name="Stevens K."/>
            <person name="Whitehead S."/>
            <person name="Barrell B.G."/>
        </authorList>
    </citation>
    <scope>NUCLEOTIDE SEQUENCE [LARGE SCALE GENOMIC DNA]</scope>
    <source>
        <strain>CT18</strain>
    </source>
</reference>
<reference key="2">
    <citation type="journal article" date="2003" name="J. Bacteriol.">
        <title>Comparative genomics of Salmonella enterica serovar Typhi strains Ty2 and CT18.</title>
        <authorList>
            <person name="Deng W."/>
            <person name="Liou S.-R."/>
            <person name="Plunkett G. III"/>
            <person name="Mayhew G.F."/>
            <person name="Rose D.J."/>
            <person name="Burland V."/>
            <person name="Kodoyianni V."/>
            <person name="Schwartz D.C."/>
            <person name="Blattner F.R."/>
        </authorList>
    </citation>
    <scope>NUCLEOTIDE SEQUENCE [LARGE SCALE GENOMIC DNA]</scope>
    <source>
        <strain>ATCC 700931 / Ty2</strain>
    </source>
</reference>
<gene>
    <name evidence="1" type="primary">hmp</name>
    <name type="synonym">hmpA</name>
    <name type="ordered locus">STY2803</name>
    <name type="ordered locus">t0300</name>
</gene>
<comment type="function">
    <text evidence="1">Is involved in NO detoxification in an aerobic process, termed nitric oxide dioxygenase (NOD) reaction that utilizes O(2) and NAD(P)H to convert NO to nitrate, which protects the bacterium from various noxious nitrogen compounds. Therefore, plays a central role in the inducible response to nitrosative stress.</text>
</comment>
<comment type="catalytic activity">
    <reaction evidence="1">
        <text>2 nitric oxide + NADPH + 2 O2 = 2 nitrate + NADP(+) + H(+)</text>
        <dbReference type="Rhea" id="RHEA:19465"/>
        <dbReference type="ChEBI" id="CHEBI:15378"/>
        <dbReference type="ChEBI" id="CHEBI:15379"/>
        <dbReference type="ChEBI" id="CHEBI:16480"/>
        <dbReference type="ChEBI" id="CHEBI:17632"/>
        <dbReference type="ChEBI" id="CHEBI:57783"/>
        <dbReference type="ChEBI" id="CHEBI:58349"/>
        <dbReference type="EC" id="1.14.12.17"/>
    </reaction>
</comment>
<comment type="catalytic activity">
    <reaction evidence="1">
        <text>2 nitric oxide + NADH + 2 O2 = 2 nitrate + NAD(+) + H(+)</text>
        <dbReference type="Rhea" id="RHEA:19469"/>
        <dbReference type="ChEBI" id="CHEBI:15378"/>
        <dbReference type="ChEBI" id="CHEBI:15379"/>
        <dbReference type="ChEBI" id="CHEBI:16480"/>
        <dbReference type="ChEBI" id="CHEBI:17632"/>
        <dbReference type="ChEBI" id="CHEBI:57540"/>
        <dbReference type="ChEBI" id="CHEBI:57945"/>
        <dbReference type="EC" id="1.14.12.17"/>
    </reaction>
</comment>
<comment type="cofactor">
    <cofactor evidence="1">
        <name>heme b</name>
        <dbReference type="ChEBI" id="CHEBI:60344"/>
    </cofactor>
    <text evidence="1">Binds 1 heme b (iron(II)-protoporphyrin IX) group per subunit.</text>
</comment>
<comment type="cofactor">
    <cofactor evidence="1">
        <name>FAD</name>
        <dbReference type="ChEBI" id="CHEBI:57692"/>
    </cofactor>
    <text evidence="1">Binds 1 FAD per subunit.</text>
</comment>
<comment type="domain">
    <text>Consists of two distinct domains; an N-terminal heme-containing oxygen-binding domain and a C-terminal reductase domain with binding sites for FAD and NAD(P)H.</text>
</comment>
<comment type="similarity">
    <text evidence="1">Belongs to the globin family. Two-domain flavohemoproteins subfamily.</text>
</comment>
<comment type="similarity">
    <text evidence="1">In the C-terminal section; belongs to the flavoprotein pyridine nucleotide cytochrome reductase family.</text>
</comment>
<keyword id="KW-0216">Detoxification</keyword>
<keyword id="KW-0274">FAD</keyword>
<keyword id="KW-0285">Flavoprotein</keyword>
<keyword id="KW-0349">Heme</keyword>
<keyword id="KW-0408">Iron</keyword>
<keyword id="KW-0479">Metal-binding</keyword>
<keyword id="KW-0520">NAD</keyword>
<keyword id="KW-0521">NADP</keyword>
<keyword id="KW-0560">Oxidoreductase</keyword>
<keyword id="KW-0561">Oxygen transport</keyword>
<keyword id="KW-0813">Transport</keyword>